<evidence type="ECO:0000250" key="1"/>
<evidence type="ECO:0000255" key="2">
    <source>
        <dbReference type="PROSITE-ProRule" id="PRU00058"/>
    </source>
</evidence>
<evidence type="ECO:0000255" key="3">
    <source>
        <dbReference type="PROSITE-ProRule" id="PRU00126"/>
    </source>
</evidence>
<evidence type="ECO:0000255" key="4">
    <source>
        <dbReference type="PROSITE-ProRule" id="PRU00548"/>
    </source>
</evidence>
<evidence type="ECO:0000256" key="5">
    <source>
        <dbReference type="SAM" id="MobiDB-lite"/>
    </source>
</evidence>
<evidence type="ECO:0000305" key="6"/>
<keyword id="KW-1185">Reference proteome</keyword>
<comment type="function">
    <text evidence="1">May act as an adapter protein to couple membrane receptors to intracellular signaling pathways.</text>
</comment>
<comment type="similarity">
    <text evidence="6">Belongs to the RANBP9/10 family.</text>
</comment>
<organism>
    <name type="scientific">Danio rerio</name>
    <name type="common">Zebrafish</name>
    <name type="synonym">Brachydanio rerio</name>
    <dbReference type="NCBI Taxonomy" id="7955"/>
    <lineage>
        <taxon>Eukaryota</taxon>
        <taxon>Metazoa</taxon>
        <taxon>Chordata</taxon>
        <taxon>Craniata</taxon>
        <taxon>Vertebrata</taxon>
        <taxon>Euteleostomi</taxon>
        <taxon>Actinopterygii</taxon>
        <taxon>Neopterygii</taxon>
        <taxon>Teleostei</taxon>
        <taxon>Ostariophysi</taxon>
        <taxon>Cypriniformes</taxon>
        <taxon>Danionidae</taxon>
        <taxon>Danioninae</taxon>
        <taxon>Danio</taxon>
    </lineage>
</organism>
<protein>
    <recommendedName>
        <fullName>Ran-binding protein 10</fullName>
        <shortName>RanBP10</shortName>
    </recommendedName>
</protein>
<sequence length="604" mass="66486">MAELGAGSLLTGDPAFNYQEHELNERLKRLYPAVNEEETPLPRSWSPKDKYSYIGLSQNNLRVHYKGHGKNHKDAASVRATHPIPAACGIYYFEVKIVSKGRDGYMGIGLSAQGVNMNRLPGWDKHSYGYHGDDGHSFCSSGTGQPYGPTFTTGDVIGCCVNLINNTCFYTKNGHSLGVAFTDLPPNLYPTVGLQTPGEIVDANFGQQPFVFDIEDYMSEWRAKIHSMIARFPIGERLGDWQAVLQNMVSSYLVHHGYCATAMAFARATETMIQEDQTSIKNRQRIQKLVLAGRVGEAIDATQQLYPGLLEHNPNLLFMLKCRQFVEMVNGTDSEVRCFSVRSPKSQDSYPGSPNMSPRHGATNPHLHSTGADSPTCSNGVTPPNKNKSHNKYTGISSASSSPSSSPSSVNYSESNSTDSTKSQPHSATSNQETSDSEMEIEAEHYSNGVTESSTRIMNGTYKHQEILQADDNSVDDTCSSRQLCGGNQAATERMIQFGRELQTLSEQLCRQYGKNATHKKMLQDAFSLLAYSDPWNCPVGQQLDPMQREAICSALNSAILESQNLPKQPPLMLALGQATECVQLMARVRSGSCSFARVDNFLH</sequence>
<name>RBP10_DANRE</name>
<gene>
    <name type="primary">ranbp10</name>
    <name type="ORF">si:dkey-16n13.2</name>
</gene>
<proteinExistence type="inferred from homology"/>
<feature type="chain" id="PRO_0000305239" description="Ran-binding protein 10">
    <location>
        <begin position="1"/>
        <end position="604"/>
    </location>
</feature>
<feature type="domain" description="B30.2/SPRY" evidence="4">
    <location>
        <begin position="23"/>
        <end position="210"/>
    </location>
</feature>
<feature type="domain" description="LisH" evidence="3">
    <location>
        <begin position="241"/>
        <end position="273"/>
    </location>
</feature>
<feature type="domain" description="CTLH" evidence="2">
    <location>
        <begin position="279"/>
        <end position="336"/>
    </location>
</feature>
<feature type="region of interest" description="Disordered" evidence="5">
    <location>
        <begin position="342"/>
        <end position="454"/>
    </location>
</feature>
<feature type="compositionally biased region" description="Polar residues" evidence="5">
    <location>
        <begin position="343"/>
        <end position="356"/>
    </location>
</feature>
<feature type="compositionally biased region" description="Polar residues" evidence="5">
    <location>
        <begin position="371"/>
        <end position="396"/>
    </location>
</feature>
<feature type="compositionally biased region" description="Low complexity" evidence="5">
    <location>
        <begin position="397"/>
        <end position="420"/>
    </location>
</feature>
<feature type="compositionally biased region" description="Polar residues" evidence="5">
    <location>
        <begin position="421"/>
        <end position="434"/>
    </location>
</feature>
<feature type="sequence conflict" description="In Ref. 1; CAN87952/CAN88227." evidence="6" ref="1">
    <original>V</original>
    <variation>VGNGVA</variation>
    <location>
        <position position="475"/>
    </location>
</feature>
<accession>Q1LUS8</accession>
<accession>A5WVR4</accession>
<dbReference type="EMBL" id="BX927240">
    <property type="protein sequence ID" value="CAK05294.1"/>
    <property type="molecule type" value="Genomic_DNA"/>
</dbReference>
<dbReference type="EMBL" id="CT025923">
    <property type="protein sequence ID" value="CAN87952.1"/>
    <property type="molecule type" value="Genomic_DNA"/>
</dbReference>
<dbReference type="EMBL" id="CT573140">
    <property type="protein sequence ID" value="CAN87952.1"/>
    <property type="status" value="JOINED"/>
    <property type="molecule type" value="Genomic_DNA"/>
</dbReference>
<dbReference type="EMBL" id="CT573140">
    <property type="protein sequence ID" value="CAN88227.1"/>
    <property type="molecule type" value="Genomic_DNA"/>
</dbReference>
<dbReference type="EMBL" id="CT025923">
    <property type="protein sequence ID" value="CAN88227.1"/>
    <property type="status" value="JOINED"/>
    <property type="molecule type" value="Genomic_DNA"/>
</dbReference>
<dbReference type="RefSeq" id="NP_001038515.1">
    <property type="nucleotide sequence ID" value="NM_001045050.2"/>
</dbReference>
<dbReference type="SMR" id="Q1LUS8"/>
<dbReference type="FunCoup" id="Q1LUS8">
    <property type="interactions" value="2180"/>
</dbReference>
<dbReference type="STRING" id="7955.ENSDARP00000123657"/>
<dbReference type="PaxDb" id="7955-ENSDARP00000123657"/>
<dbReference type="GeneID" id="793293"/>
<dbReference type="KEGG" id="dre:793293"/>
<dbReference type="AGR" id="ZFIN:ZDB-GENE-070705-86"/>
<dbReference type="CTD" id="57610"/>
<dbReference type="ZFIN" id="ZDB-GENE-070705-86">
    <property type="gene designation" value="ranbp10"/>
</dbReference>
<dbReference type="eggNOG" id="KOG1477">
    <property type="taxonomic scope" value="Eukaryota"/>
</dbReference>
<dbReference type="HOGENOM" id="CLU_009129_4_0_1"/>
<dbReference type="InParanoid" id="Q1LUS8"/>
<dbReference type="OrthoDB" id="25503at2759"/>
<dbReference type="PhylomeDB" id="Q1LUS8"/>
<dbReference type="TreeFam" id="TF331658"/>
<dbReference type="PRO" id="PR:Q1LUS8"/>
<dbReference type="Proteomes" id="UP000000437">
    <property type="component" value="Alternate scaffold 18"/>
</dbReference>
<dbReference type="Proteomes" id="UP000000437">
    <property type="component" value="Chromosome 18"/>
</dbReference>
<dbReference type="GO" id="GO:0005737">
    <property type="term" value="C:cytoplasm"/>
    <property type="evidence" value="ECO:0000318"/>
    <property type="project" value="GO_Central"/>
</dbReference>
<dbReference type="GO" id="GO:0007010">
    <property type="term" value="P:cytoskeleton organization"/>
    <property type="evidence" value="ECO:0000318"/>
    <property type="project" value="GO_Central"/>
</dbReference>
<dbReference type="CDD" id="cd12909">
    <property type="entry name" value="SPRY_RanBP9_10"/>
    <property type="match status" value="1"/>
</dbReference>
<dbReference type="FunFam" id="2.60.120.920:FF:000011">
    <property type="entry name" value="RAN binding protein 10"/>
    <property type="match status" value="1"/>
</dbReference>
<dbReference type="Gene3D" id="2.60.120.920">
    <property type="match status" value="1"/>
</dbReference>
<dbReference type="InterPro" id="IPR001870">
    <property type="entry name" value="B30.2/SPRY"/>
</dbReference>
<dbReference type="InterPro" id="IPR043136">
    <property type="entry name" value="B30.2/SPRY_sf"/>
</dbReference>
<dbReference type="InterPro" id="IPR013320">
    <property type="entry name" value="ConA-like_dom_sf"/>
</dbReference>
<dbReference type="InterPro" id="IPR013144">
    <property type="entry name" value="CRA_dom"/>
</dbReference>
<dbReference type="InterPro" id="IPR024964">
    <property type="entry name" value="CTLH/CRA"/>
</dbReference>
<dbReference type="InterPro" id="IPR006595">
    <property type="entry name" value="CTLH_C"/>
</dbReference>
<dbReference type="InterPro" id="IPR006594">
    <property type="entry name" value="LisH"/>
</dbReference>
<dbReference type="InterPro" id="IPR003877">
    <property type="entry name" value="SPRY_dom"/>
</dbReference>
<dbReference type="InterPro" id="IPR035782">
    <property type="entry name" value="SPRY_RanBP9/10"/>
</dbReference>
<dbReference type="InterPro" id="IPR050618">
    <property type="entry name" value="Ubq-SigPath_Reg"/>
</dbReference>
<dbReference type="PANTHER" id="PTHR12864">
    <property type="entry name" value="RAN BINDING PROTEIN 9-RELATED"/>
    <property type="match status" value="1"/>
</dbReference>
<dbReference type="Pfam" id="PF10607">
    <property type="entry name" value="CTLH"/>
    <property type="match status" value="2"/>
</dbReference>
<dbReference type="Pfam" id="PF00622">
    <property type="entry name" value="SPRY"/>
    <property type="match status" value="1"/>
</dbReference>
<dbReference type="SMART" id="SM00757">
    <property type="entry name" value="CRA"/>
    <property type="match status" value="1"/>
</dbReference>
<dbReference type="SMART" id="SM00668">
    <property type="entry name" value="CTLH"/>
    <property type="match status" value="1"/>
</dbReference>
<dbReference type="SMART" id="SM00449">
    <property type="entry name" value="SPRY"/>
    <property type="match status" value="1"/>
</dbReference>
<dbReference type="SUPFAM" id="SSF49899">
    <property type="entry name" value="Concanavalin A-like lectins/glucanases"/>
    <property type="match status" value="1"/>
</dbReference>
<dbReference type="PROSITE" id="PS50188">
    <property type="entry name" value="B302_SPRY"/>
    <property type="match status" value="1"/>
</dbReference>
<dbReference type="PROSITE" id="PS50897">
    <property type="entry name" value="CTLH"/>
    <property type="match status" value="1"/>
</dbReference>
<dbReference type="PROSITE" id="PS50896">
    <property type="entry name" value="LISH"/>
    <property type="match status" value="1"/>
</dbReference>
<reference key="1">
    <citation type="journal article" date="2013" name="Nature">
        <title>The zebrafish reference genome sequence and its relationship to the human genome.</title>
        <authorList>
            <person name="Howe K."/>
            <person name="Clark M.D."/>
            <person name="Torroja C.F."/>
            <person name="Torrance J."/>
            <person name="Berthelot C."/>
            <person name="Muffato M."/>
            <person name="Collins J.E."/>
            <person name="Humphray S."/>
            <person name="McLaren K."/>
            <person name="Matthews L."/>
            <person name="McLaren S."/>
            <person name="Sealy I."/>
            <person name="Caccamo M."/>
            <person name="Churcher C."/>
            <person name="Scott C."/>
            <person name="Barrett J.C."/>
            <person name="Koch R."/>
            <person name="Rauch G.J."/>
            <person name="White S."/>
            <person name="Chow W."/>
            <person name="Kilian B."/>
            <person name="Quintais L.T."/>
            <person name="Guerra-Assuncao J.A."/>
            <person name="Zhou Y."/>
            <person name="Gu Y."/>
            <person name="Yen J."/>
            <person name="Vogel J.H."/>
            <person name="Eyre T."/>
            <person name="Redmond S."/>
            <person name="Banerjee R."/>
            <person name="Chi J."/>
            <person name="Fu B."/>
            <person name="Langley E."/>
            <person name="Maguire S.F."/>
            <person name="Laird G.K."/>
            <person name="Lloyd D."/>
            <person name="Kenyon E."/>
            <person name="Donaldson S."/>
            <person name="Sehra H."/>
            <person name="Almeida-King J."/>
            <person name="Loveland J."/>
            <person name="Trevanion S."/>
            <person name="Jones M."/>
            <person name="Quail M."/>
            <person name="Willey D."/>
            <person name="Hunt A."/>
            <person name="Burton J."/>
            <person name="Sims S."/>
            <person name="McLay K."/>
            <person name="Plumb B."/>
            <person name="Davis J."/>
            <person name="Clee C."/>
            <person name="Oliver K."/>
            <person name="Clark R."/>
            <person name="Riddle C."/>
            <person name="Elliot D."/>
            <person name="Threadgold G."/>
            <person name="Harden G."/>
            <person name="Ware D."/>
            <person name="Begum S."/>
            <person name="Mortimore B."/>
            <person name="Kerry G."/>
            <person name="Heath P."/>
            <person name="Phillimore B."/>
            <person name="Tracey A."/>
            <person name="Corby N."/>
            <person name="Dunn M."/>
            <person name="Johnson C."/>
            <person name="Wood J."/>
            <person name="Clark S."/>
            <person name="Pelan S."/>
            <person name="Griffiths G."/>
            <person name="Smith M."/>
            <person name="Glithero R."/>
            <person name="Howden P."/>
            <person name="Barker N."/>
            <person name="Lloyd C."/>
            <person name="Stevens C."/>
            <person name="Harley J."/>
            <person name="Holt K."/>
            <person name="Panagiotidis G."/>
            <person name="Lovell J."/>
            <person name="Beasley H."/>
            <person name="Henderson C."/>
            <person name="Gordon D."/>
            <person name="Auger K."/>
            <person name="Wright D."/>
            <person name="Collins J."/>
            <person name="Raisen C."/>
            <person name="Dyer L."/>
            <person name="Leung K."/>
            <person name="Robertson L."/>
            <person name="Ambridge K."/>
            <person name="Leongamornlert D."/>
            <person name="McGuire S."/>
            <person name="Gilderthorp R."/>
            <person name="Griffiths C."/>
            <person name="Manthravadi D."/>
            <person name="Nichol S."/>
            <person name="Barker G."/>
            <person name="Whitehead S."/>
            <person name="Kay M."/>
            <person name="Brown J."/>
            <person name="Murnane C."/>
            <person name="Gray E."/>
            <person name="Humphries M."/>
            <person name="Sycamore N."/>
            <person name="Barker D."/>
            <person name="Saunders D."/>
            <person name="Wallis J."/>
            <person name="Babbage A."/>
            <person name="Hammond S."/>
            <person name="Mashreghi-Mohammadi M."/>
            <person name="Barr L."/>
            <person name="Martin S."/>
            <person name="Wray P."/>
            <person name="Ellington A."/>
            <person name="Matthews N."/>
            <person name="Ellwood M."/>
            <person name="Woodmansey R."/>
            <person name="Clark G."/>
            <person name="Cooper J."/>
            <person name="Tromans A."/>
            <person name="Grafham D."/>
            <person name="Skuce C."/>
            <person name="Pandian R."/>
            <person name="Andrews R."/>
            <person name="Harrison E."/>
            <person name="Kimberley A."/>
            <person name="Garnett J."/>
            <person name="Fosker N."/>
            <person name="Hall R."/>
            <person name="Garner P."/>
            <person name="Kelly D."/>
            <person name="Bird C."/>
            <person name="Palmer S."/>
            <person name="Gehring I."/>
            <person name="Berger A."/>
            <person name="Dooley C.M."/>
            <person name="Ersan-Urun Z."/>
            <person name="Eser C."/>
            <person name="Geiger H."/>
            <person name="Geisler M."/>
            <person name="Karotki L."/>
            <person name="Kirn A."/>
            <person name="Konantz J."/>
            <person name="Konantz M."/>
            <person name="Oberlander M."/>
            <person name="Rudolph-Geiger S."/>
            <person name="Teucke M."/>
            <person name="Lanz C."/>
            <person name="Raddatz G."/>
            <person name="Osoegawa K."/>
            <person name="Zhu B."/>
            <person name="Rapp A."/>
            <person name="Widaa S."/>
            <person name="Langford C."/>
            <person name="Yang F."/>
            <person name="Schuster S.C."/>
            <person name="Carter N.P."/>
            <person name="Harrow J."/>
            <person name="Ning Z."/>
            <person name="Herrero J."/>
            <person name="Searle S.M."/>
            <person name="Enright A."/>
            <person name="Geisler R."/>
            <person name="Plasterk R.H."/>
            <person name="Lee C."/>
            <person name="Westerfield M."/>
            <person name="de Jong P.J."/>
            <person name="Zon L.I."/>
            <person name="Postlethwait J.H."/>
            <person name="Nusslein-Volhard C."/>
            <person name="Hubbard T.J."/>
            <person name="Roest Crollius H."/>
            <person name="Rogers J."/>
            <person name="Stemple D.L."/>
        </authorList>
    </citation>
    <scope>NUCLEOTIDE SEQUENCE [LARGE SCALE GENOMIC DNA]</scope>
    <source>
        <strain>Tuebingen</strain>
    </source>
</reference>